<protein>
    <recommendedName>
        <fullName evidence="2">U1-ectatotoxin-Eb1a subunit B</fullName>
        <shortName evidence="2">U1-ECTX-Eb1a subunit B</shortName>
    </recommendedName>
    <alternativeName>
        <fullName evidence="1">Ectatomin-Eq1 subunit B</fullName>
    </alternativeName>
</protein>
<accession>P0DSK9</accession>
<organism>
    <name type="scientific">Ectatomma brunneum</name>
    <name type="common">Ant</name>
    <name type="synonym">Ectatomma quadridens</name>
    <dbReference type="NCBI Taxonomy" id="369127"/>
    <lineage>
        <taxon>Eukaryota</taxon>
        <taxon>Metazoa</taxon>
        <taxon>Ecdysozoa</taxon>
        <taxon>Arthropoda</taxon>
        <taxon>Hexapoda</taxon>
        <taxon>Insecta</taxon>
        <taxon>Pterygota</taxon>
        <taxon>Neoptera</taxon>
        <taxon>Endopterygota</taxon>
        <taxon>Hymenoptera</taxon>
        <taxon>Apocrita</taxon>
        <taxon>Aculeata</taxon>
        <taxon>Formicoidea</taxon>
        <taxon>Formicidae</taxon>
        <taxon>Ectatomminae</taxon>
        <taxon>Ectatommini</taxon>
        <taxon>Ectatomma</taxon>
    </lineage>
</organism>
<comment type="subunit">
    <text evidence="4">Heterodimer of subunits A and B; disulfide-linked.</text>
</comment>
<comment type="subcellular location">
    <subcellularLocation>
        <location evidence="4">Secreted</location>
    </subcellularLocation>
    <subcellularLocation>
        <location evidence="4">Target cell membrane</location>
    </subcellularLocation>
</comment>
<comment type="tissue specificity">
    <text evidence="4">Expressed by the venom gland.</text>
</comment>
<comment type="similarity">
    <text evidence="3">Belongs to the ectatomin family. Ectatomin-Eq subfamily.</text>
</comment>
<reference key="1">
    <citation type="journal article" date="2014" name="Toxicon">
        <title>Diversity of peptide toxins from stinging ant venoms.</title>
        <authorList>
            <person name="Aili S.R."/>
            <person name="Touchard A."/>
            <person name="Escoubas P."/>
            <person name="Padula M.P."/>
            <person name="Orivel J."/>
            <person name="Dejean A."/>
            <person name="Nicholson G.M."/>
        </authorList>
    </citation>
    <scope>REVIEW</scope>
    <scope>PROTEIN SEQUENCE</scope>
</reference>
<reference key="2">
    <citation type="journal article" date="2016" name="Toxins">
        <title>The biochemical toxin arsenal from ant venoms.</title>
        <authorList>
            <person name="Touchard A."/>
            <person name="Aili S.R."/>
            <person name="Fox E.G."/>
            <person name="Escoubas P."/>
            <person name="Orivel J."/>
            <person name="Nicholson G.M."/>
            <person name="Dejean A."/>
        </authorList>
    </citation>
    <scope>REVIEW</scope>
    <scope>NOMENCLATURE</scope>
</reference>
<name>TX1AB_ECTBR</name>
<evidence type="ECO:0000303" key="1">
    <source>
    </source>
</evidence>
<evidence type="ECO:0000303" key="2">
    <source>
    </source>
</evidence>
<evidence type="ECO:0000305" key="3"/>
<evidence type="ECO:0000305" key="4">
    <source>
    </source>
</evidence>
<proteinExistence type="evidence at protein level"/>
<keyword id="KW-0903">Direct protein sequencing</keyword>
<keyword id="KW-1015">Disulfide bond</keyword>
<keyword id="KW-0472">Membrane</keyword>
<keyword id="KW-0964">Secreted</keyword>
<keyword id="KW-1052">Target cell membrane</keyword>
<keyword id="KW-1053">Target membrane</keyword>
<keyword id="KW-0800">Toxin</keyword>
<dbReference type="SMR" id="P0DSK9"/>
<dbReference type="GO" id="GO:0005576">
    <property type="term" value="C:extracellular region"/>
    <property type="evidence" value="ECO:0007669"/>
    <property type="project" value="UniProtKB-SubCell"/>
</dbReference>
<dbReference type="GO" id="GO:0016020">
    <property type="term" value="C:membrane"/>
    <property type="evidence" value="ECO:0007669"/>
    <property type="project" value="UniProtKB-KW"/>
</dbReference>
<dbReference type="GO" id="GO:0044218">
    <property type="term" value="C:other organism cell membrane"/>
    <property type="evidence" value="ECO:0007669"/>
    <property type="project" value="UniProtKB-KW"/>
</dbReference>
<dbReference type="GO" id="GO:0090729">
    <property type="term" value="F:toxin activity"/>
    <property type="evidence" value="ECO:0007669"/>
    <property type="project" value="UniProtKB-KW"/>
</dbReference>
<sequence>FAIGAIIKKFGKKLVEYAVKHKDLYAPYIKKHLCEKL</sequence>
<feature type="chain" id="PRO_0000447103" description="U1-ectatotoxin-Eb1a subunit B" evidence="4">
    <location>
        <begin position="1"/>
        <end position="37"/>
    </location>
</feature>
<feature type="disulfide bond" description="Interchain (with C-37 in subunit A)" evidence="4">
    <location>
        <position position="34"/>
    </location>
</feature>